<dbReference type="EMBL" id="AF382889">
    <property type="protein sequence ID" value="AAL32363.1"/>
    <property type="molecule type" value="Genomic_DNA"/>
</dbReference>
<dbReference type="SMR" id="Q8WGF6"/>
<dbReference type="GO" id="GO:0005743">
    <property type="term" value="C:mitochondrial inner membrane"/>
    <property type="evidence" value="ECO:0007669"/>
    <property type="project" value="UniProtKB-SubCell"/>
</dbReference>
<dbReference type="GO" id="GO:0045275">
    <property type="term" value="C:respiratory chain complex III"/>
    <property type="evidence" value="ECO:0007669"/>
    <property type="project" value="InterPro"/>
</dbReference>
<dbReference type="GO" id="GO:0046872">
    <property type="term" value="F:metal ion binding"/>
    <property type="evidence" value="ECO:0007669"/>
    <property type="project" value="UniProtKB-KW"/>
</dbReference>
<dbReference type="GO" id="GO:0008121">
    <property type="term" value="F:ubiquinol-cytochrome-c reductase activity"/>
    <property type="evidence" value="ECO:0007669"/>
    <property type="project" value="InterPro"/>
</dbReference>
<dbReference type="GO" id="GO:0006122">
    <property type="term" value="P:mitochondrial electron transport, ubiquinol to cytochrome c"/>
    <property type="evidence" value="ECO:0007669"/>
    <property type="project" value="TreeGrafter"/>
</dbReference>
<dbReference type="CDD" id="cd00290">
    <property type="entry name" value="cytochrome_b_C"/>
    <property type="match status" value="1"/>
</dbReference>
<dbReference type="CDD" id="cd00284">
    <property type="entry name" value="Cytochrome_b_N"/>
    <property type="match status" value="1"/>
</dbReference>
<dbReference type="FunFam" id="1.20.810.10:FF:000002">
    <property type="entry name" value="Cytochrome b"/>
    <property type="match status" value="1"/>
</dbReference>
<dbReference type="Gene3D" id="1.20.810.10">
    <property type="entry name" value="Cytochrome Bc1 Complex, Chain C"/>
    <property type="match status" value="1"/>
</dbReference>
<dbReference type="InterPro" id="IPR005798">
    <property type="entry name" value="Cyt_b/b6_C"/>
</dbReference>
<dbReference type="InterPro" id="IPR036150">
    <property type="entry name" value="Cyt_b/b6_C_sf"/>
</dbReference>
<dbReference type="InterPro" id="IPR005797">
    <property type="entry name" value="Cyt_b/b6_N"/>
</dbReference>
<dbReference type="InterPro" id="IPR027387">
    <property type="entry name" value="Cytb/b6-like_sf"/>
</dbReference>
<dbReference type="InterPro" id="IPR030689">
    <property type="entry name" value="Cytochrome_b"/>
</dbReference>
<dbReference type="InterPro" id="IPR048260">
    <property type="entry name" value="Cytochrome_b_C_euk/bac"/>
</dbReference>
<dbReference type="InterPro" id="IPR048259">
    <property type="entry name" value="Cytochrome_b_N_euk/bac"/>
</dbReference>
<dbReference type="InterPro" id="IPR016174">
    <property type="entry name" value="Di-haem_cyt_TM"/>
</dbReference>
<dbReference type="PANTHER" id="PTHR19271">
    <property type="entry name" value="CYTOCHROME B"/>
    <property type="match status" value="1"/>
</dbReference>
<dbReference type="PANTHER" id="PTHR19271:SF16">
    <property type="entry name" value="CYTOCHROME B"/>
    <property type="match status" value="1"/>
</dbReference>
<dbReference type="Pfam" id="PF00032">
    <property type="entry name" value="Cytochrom_B_C"/>
    <property type="match status" value="1"/>
</dbReference>
<dbReference type="Pfam" id="PF00033">
    <property type="entry name" value="Cytochrome_B"/>
    <property type="match status" value="1"/>
</dbReference>
<dbReference type="PIRSF" id="PIRSF038885">
    <property type="entry name" value="COB"/>
    <property type="match status" value="1"/>
</dbReference>
<dbReference type="SUPFAM" id="SSF81648">
    <property type="entry name" value="a domain/subunit of cytochrome bc1 complex (Ubiquinol-cytochrome c reductase)"/>
    <property type="match status" value="1"/>
</dbReference>
<dbReference type="SUPFAM" id="SSF81342">
    <property type="entry name" value="Transmembrane di-heme cytochromes"/>
    <property type="match status" value="1"/>
</dbReference>
<dbReference type="PROSITE" id="PS51003">
    <property type="entry name" value="CYTB_CTER"/>
    <property type="match status" value="1"/>
</dbReference>
<dbReference type="PROSITE" id="PS51002">
    <property type="entry name" value="CYTB_NTER"/>
    <property type="match status" value="1"/>
</dbReference>
<proteinExistence type="inferred from homology"/>
<geneLocation type="mitochondrion"/>
<sequence length="379" mass="42555">MTNIRKTHPLLKIINNSLVDLPAPSSLSAWWNFGSLLGVCLAVQILTGLFLAMHYTSDTATAFNSVTHICRDVNYGWVLRYLHANGASMFFICLYLHVGRGLYYGSYTYSETWNVGILLLSAVMATAFMGYVLPWGQMSFWGATVITNLLSAIPYIGTDLVQWIWGGFSVDKATLTRFFAFHFLLPFIVAALVMVHLLFLHETGSNNPTGIPSDPDMIPFHPYYTIKDILGFLTMLTALSALVLFNPDLLGDPDNYTPANPLNTPPHIKPEWYFLFAYAILRSIPNKLGGVLALVMSILILAIVPMLHTSKQRSMMFRPLSQCLFWLLVAILLTLTWIGGQPVEYPYVIIGQTASILYFLTILIFMPLVSIMENHLLKW</sequence>
<comment type="function">
    <text evidence="2">Component of the ubiquinol-cytochrome c reductase complex (complex III or cytochrome b-c1 complex) that is part of the mitochondrial respiratory chain. The b-c1 complex mediates electron transfer from ubiquinol to cytochrome c. Contributes to the generation of a proton gradient across the mitochondrial membrane that is then used for ATP synthesis.</text>
</comment>
<comment type="cofactor">
    <cofactor evidence="2">
        <name>heme b</name>
        <dbReference type="ChEBI" id="CHEBI:60344"/>
    </cofactor>
    <text evidence="2">Binds 2 heme b groups non-covalently.</text>
</comment>
<comment type="subunit">
    <text evidence="2">The cytochrome bc1 complex contains 11 subunits: 3 respiratory subunits (MT-CYB, CYC1 and UQCRFS1), 2 core proteins (UQCRC1 and UQCRC2) and 6 low-molecular weight proteins (UQCRH/QCR6, UQCRB/QCR7, UQCRQ/QCR8, UQCR10/QCR9, UQCR11/QCR10 and a cleavage product of UQCRFS1). This cytochrome bc1 complex then forms a dimer.</text>
</comment>
<comment type="subcellular location">
    <subcellularLocation>
        <location evidence="2">Mitochondrion inner membrane</location>
        <topology evidence="2">Multi-pass membrane protein</topology>
    </subcellularLocation>
</comment>
<comment type="miscellaneous">
    <text evidence="1">Heme 1 (or BL or b562) is low-potential and absorbs at about 562 nm, and heme 2 (or BH or b566) is high-potential and absorbs at about 566 nm.</text>
</comment>
<comment type="similarity">
    <text evidence="3 4">Belongs to the cytochrome b family.</text>
</comment>
<comment type="caution">
    <text evidence="2">The full-length protein contains only eight transmembrane helices, not nine as predicted by bioinformatics tools.</text>
</comment>
<evidence type="ECO:0000250" key="1"/>
<evidence type="ECO:0000250" key="2">
    <source>
        <dbReference type="UniProtKB" id="P00157"/>
    </source>
</evidence>
<evidence type="ECO:0000255" key="3">
    <source>
        <dbReference type="PROSITE-ProRule" id="PRU00967"/>
    </source>
</evidence>
<evidence type="ECO:0000255" key="4">
    <source>
        <dbReference type="PROSITE-ProRule" id="PRU00968"/>
    </source>
</evidence>
<organism>
    <name type="scientific">Leptonycteris curasoae</name>
    <name type="common">Southern long-nosed bat</name>
    <dbReference type="NCBI Taxonomy" id="55054"/>
    <lineage>
        <taxon>Eukaryota</taxon>
        <taxon>Metazoa</taxon>
        <taxon>Chordata</taxon>
        <taxon>Craniata</taxon>
        <taxon>Vertebrata</taxon>
        <taxon>Euteleostomi</taxon>
        <taxon>Mammalia</taxon>
        <taxon>Eutheria</taxon>
        <taxon>Laurasiatheria</taxon>
        <taxon>Chiroptera</taxon>
        <taxon>Yangochiroptera</taxon>
        <taxon>Phyllostomidae</taxon>
        <taxon>Glossophaginae</taxon>
        <taxon>Leptonycteris</taxon>
    </lineage>
</organism>
<reference key="1">
    <citation type="journal article" date="2001" name="J. Mammal.">
        <title>Systematics of bats of the genus Glossophaga (Chiroptera: Phyllostomidae) and phylogeography in G. soricina based on the cytochrome b gene.</title>
        <authorList>
            <person name="Hoffmann F.G."/>
            <person name="Baker R.J."/>
        </authorList>
    </citation>
    <scope>NUCLEOTIDE SEQUENCE [GENOMIC DNA]</scope>
    <source>
        <strain>Isolate TK 45107</strain>
    </source>
</reference>
<feature type="chain" id="PRO_0000061103" description="Cytochrome b">
    <location>
        <begin position="1"/>
        <end position="379"/>
    </location>
</feature>
<feature type="transmembrane region" description="Helical" evidence="2">
    <location>
        <begin position="33"/>
        <end position="53"/>
    </location>
</feature>
<feature type="transmembrane region" description="Helical" evidence="2">
    <location>
        <begin position="77"/>
        <end position="98"/>
    </location>
</feature>
<feature type="transmembrane region" description="Helical" evidence="2">
    <location>
        <begin position="113"/>
        <end position="133"/>
    </location>
</feature>
<feature type="transmembrane region" description="Helical" evidence="2">
    <location>
        <begin position="178"/>
        <end position="198"/>
    </location>
</feature>
<feature type="transmembrane region" description="Helical" evidence="2">
    <location>
        <begin position="226"/>
        <end position="246"/>
    </location>
</feature>
<feature type="transmembrane region" description="Helical" evidence="2">
    <location>
        <begin position="288"/>
        <end position="308"/>
    </location>
</feature>
<feature type="transmembrane region" description="Helical" evidence="2">
    <location>
        <begin position="320"/>
        <end position="340"/>
    </location>
</feature>
<feature type="transmembrane region" description="Helical" evidence="2">
    <location>
        <begin position="347"/>
        <end position="367"/>
    </location>
</feature>
<feature type="binding site" description="axial binding residue" evidence="2">
    <location>
        <position position="83"/>
    </location>
    <ligand>
        <name>heme b</name>
        <dbReference type="ChEBI" id="CHEBI:60344"/>
        <label>b562</label>
    </ligand>
    <ligandPart>
        <name>Fe</name>
        <dbReference type="ChEBI" id="CHEBI:18248"/>
    </ligandPart>
</feature>
<feature type="binding site" description="axial binding residue" evidence="2">
    <location>
        <position position="97"/>
    </location>
    <ligand>
        <name>heme b</name>
        <dbReference type="ChEBI" id="CHEBI:60344"/>
        <label>b566</label>
    </ligand>
    <ligandPart>
        <name>Fe</name>
        <dbReference type="ChEBI" id="CHEBI:18248"/>
    </ligandPart>
</feature>
<feature type="binding site" description="axial binding residue" evidence="2">
    <location>
        <position position="182"/>
    </location>
    <ligand>
        <name>heme b</name>
        <dbReference type="ChEBI" id="CHEBI:60344"/>
        <label>b562</label>
    </ligand>
    <ligandPart>
        <name>Fe</name>
        <dbReference type="ChEBI" id="CHEBI:18248"/>
    </ligandPart>
</feature>
<feature type="binding site" description="axial binding residue" evidence="2">
    <location>
        <position position="196"/>
    </location>
    <ligand>
        <name>heme b</name>
        <dbReference type="ChEBI" id="CHEBI:60344"/>
        <label>b566</label>
    </ligand>
    <ligandPart>
        <name>Fe</name>
        <dbReference type="ChEBI" id="CHEBI:18248"/>
    </ligandPart>
</feature>
<feature type="binding site" evidence="2">
    <location>
        <position position="201"/>
    </location>
    <ligand>
        <name>a ubiquinone</name>
        <dbReference type="ChEBI" id="CHEBI:16389"/>
    </ligand>
</feature>
<accession>Q8WGF6</accession>
<gene>
    <name type="primary">MT-CYB</name>
    <name type="synonym">COB</name>
    <name type="synonym">CYTB</name>
    <name type="synonym">MTCYB</name>
</gene>
<protein>
    <recommendedName>
        <fullName>Cytochrome b</fullName>
    </recommendedName>
    <alternativeName>
        <fullName>Complex III subunit 3</fullName>
    </alternativeName>
    <alternativeName>
        <fullName>Complex III subunit III</fullName>
    </alternativeName>
    <alternativeName>
        <fullName>Cytochrome b-c1 complex subunit 3</fullName>
    </alternativeName>
    <alternativeName>
        <fullName>Ubiquinol-cytochrome-c reductase complex cytochrome b subunit</fullName>
    </alternativeName>
</protein>
<keyword id="KW-0249">Electron transport</keyword>
<keyword id="KW-0349">Heme</keyword>
<keyword id="KW-0408">Iron</keyword>
<keyword id="KW-0472">Membrane</keyword>
<keyword id="KW-0479">Metal-binding</keyword>
<keyword id="KW-0496">Mitochondrion</keyword>
<keyword id="KW-0999">Mitochondrion inner membrane</keyword>
<keyword id="KW-0679">Respiratory chain</keyword>
<keyword id="KW-0812">Transmembrane</keyword>
<keyword id="KW-1133">Transmembrane helix</keyword>
<keyword id="KW-0813">Transport</keyword>
<keyword id="KW-0830">Ubiquinone</keyword>
<name>CYB_LEPCU</name>